<gene>
    <name evidence="1" type="primary">prmA</name>
    <name type="ordered locus">Athe_1549</name>
</gene>
<comment type="function">
    <text evidence="1">Methylates ribosomal protein L11.</text>
</comment>
<comment type="catalytic activity">
    <reaction evidence="1">
        <text>L-lysyl-[protein] + 3 S-adenosyl-L-methionine = N(6),N(6),N(6)-trimethyl-L-lysyl-[protein] + 3 S-adenosyl-L-homocysteine + 3 H(+)</text>
        <dbReference type="Rhea" id="RHEA:54192"/>
        <dbReference type="Rhea" id="RHEA-COMP:9752"/>
        <dbReference type="Rhea" id="RHEA-COMP:13826"/>
        <dbReference type="ChEBI" id="CHEBI:15378"/>
        <dbReference type="ChEBI" id="CHEBI:29969"/>
        <dbReference type="ChEBI" id="CHEBI:57856"/>
        <dbReference type="ChEBI" id="CHEBI:59789"/>
        <dbReference type="ChEBI" id="CHEBI:61961"/>
    </reaction>
</comment>
<comment type="subcellular location">
    <subcellularLocation>
        <location evidence="1">Cytoplasm</location>
    </subcellularLocation>
</comment>
<comment type="similarity">
    <text evidence="1">Belongs to the methyltransferase superfamily. PrmA family.</text>
</comment>
<organism>
    <name type="scientific">Caldicellulosiruptor bescii (strain ATCC BAA-1888 / DSM 6725 / KCTC 15123 / Z-1320)</name>
    <name type="common">Anaerocellum thermophilum</name>
    <dbReference type="NCBI Taxonomy" id="521460"/>
    <lineage>
        <taxon>Bacteria</taxon>
        <taxon>Bacillati</taxon>
        <taxon>Bacillota</taxon>
        <taxon>Bacillota incertae sedis</taxon>
        <taxon>Caldicellulosiruptorales</taxon>
        <taxon>Caldicellulosiruptoraceae</taxon>
        <taxon>Caldicellulosiruptor</taxon>
    </lineage>
</organism>
<evidence type="ECO:0000255" key="1">
    <source>
        <dbReference type="HAMAP-Rule" id="MF_00735"/>
    </source>
</evidence>
<dbReference type="EC" id="2.1.1.-" evidence="1"/>
<dbReference type="EMBL" id="CP001393">
    <property type="protein sequence ID" value="ACM60647.1"/>
    <property type="molecule type" value="Genomic_DNA"/>
</dbReference>
<dbReference type="RefSeq" id="WP_015907994.1">
    <property type="nucleotide sequence ID" value="NC_012034.1"/>
</dbReference>
<dbReference type="SMR" id="B9MJY9"/>
<dbReference type="STRING" id="521460.Athe_1549"/>
<dbReference type="GeneID" id="31772902"/>
<dbReference type="KEGG" id="ate:Athe_1549"/>
<dbReference type="eggNOG" id="COG2264">
    <property type="taxonomic scope" value="Bacteria"/>
</dbReference>
<dbReference type="HOGENOM" id="CLU_049382_0_1_9"/>
<dbReference type="Proteomes" id="UP000007723">
    <property type="component" value="Chromosome"/>
</dbReference>
<dbReference type="GO" id="GO:0005737">
    <property type="term" value="C:cytoplasm"/>
    <property type="evidence" value="ECO:0007669"/>
    <property type="project" value="UniProtKB-SubCell"/>
</dbReference>
<dbReference type="GO" id="GO:0016279">
    <property type="term" value="F:protein-lysine N-methyltransferase activity"/>
    <property type="evidence" value="ECO:0007669"/>
    <property type="project" value="RHEA"/>
</dbReference>
<dbReference type="GO" id="GO:0032259">
    <property type="term" value="P:methylation"/>
    <property type="evidence" value="ECO:0007669"/>
    <property type="project" value="UniProtKB-KW"/>
</dbReference>
<dbReference type="CDD" id="cd02440">
    <property type="entry name" value="AdoMet_MTases"/>
    <property type="match status" value="1"/>
</dbReference>
<dbReference type="Gene3D" id="3.40.50.150">
    <property type="entry name" value="Vaccinia Virus protein VP39"/>
    <property type="match status" value="1"/>
</dbReference>
<dbReference type="HAMAP" id="MF_00735">
    <property type="entry name" value="Methyltr_PrmA"/>
    <property type="match status" value="1"/>
</dbReference>
<dbReference type="InterPro" id="IPR050078">
    <property type="entry name" value="Ribosomal_L11_MeTrfase_PrmA"/>
</dbReference>
<dbReference type="InterPro" id="IPR004498">
    <property type="entry name" value="Ribosomal_PrmA_MeTrfase"/>
</dbReference>
<dbReference type="InterPro" id="IPR029063">
    <property type="entry name" value="SAM-dependent_MTases_sf"/>
</dbReference>
<dbReference type="NCBIfam" id="TIGR00406">
    <property type="entry name" value="prmA"/>
    <property type="match status" value="1"/>
</dbReference>
<dbReference type="PANTHER" id="PTHR43648">
    <property type="entry name" value="ELECTRON TRANSFER FLAVOPROTEIN BETA SUBUNIT LYSINE METHYLTRANSFERASE"/>
    <property type="match status" value="1"/>
</dbReference>
<dbReference type="PANTHER" id="PTHR43648:SF1">
    <property type="entry name" value="ELECTRON TRANSFER FLAVOPROTEIN BETA SUBUNIT LYSINE METHYLTRANSFERASE"/>
    <property type="match status" value="1"/>
</dbReference>
<dbReference type="Pfam" id="PF06325">
    <property type="entry name" value="PrmA"/>
    <property type="match status" value="1"/>
</dbReference>
<dbReference type="PIRSF" id="PIRSF000401">
    <property type="entry name" value="RPL11_MTase"/>
    <property type="match status" value="1"/>
</dbReference>
<dbReference type="SUPFAM" id="SSF53335">
    <property type="entry name" value="S-adenosyl-L-methionine-dependent methyltransferases"/>
    <property type="match status" value="1"/>
</dbReference>
<keyword id="KW-0963">Cytoplasm</keyword>
<keyword id="KW-0489">Methyltransferase</keyword>
<keyword id="KW-0949">S-adenosyl-L-methionine</keyword>
<keyword id="KW-0808">Transferase</keyword>
<protein>
    <recommendedName>
        <fullName evidence="1">Ribosomal protein L11 methyltransferase</fullName>
        <shortName evidence="1">L11 Mtase</shortName>
        <ecNumber evidence="1">2.1.1.-</ecNumber>
    </recommendedName>
</protein>
<reference key="1">
    <citation type="submission" date="2009-01" db="EMBL/GenBank/DDBJ databases">
        <title>Complete sequence of chromosome of Caldicellulosiruptor becscii DSM 6725.</title>
        <authorList>
            <person name="Lucas S."/>
            <person name="Copeland A."/>
            <person name="Lapidus A."/>
            <person name="Glavina del Rio T."/>
            <person name="Tice H."/>
            <person name="Bruce D."/>
            <person name="Goodwin L."/>
            <person name="Pitluck S."/>
            <person name="Sims D."/>
            <person name="Meincke L."/>
            <person name="Brettin T."/>
            <person name="Detter J.C."/>
            <person name="Han C."/>
            <person name="Larimer F."/>
            <person name="Land M."/>
            <person name="Hauser L."/>
            <person name="Kyrpides N."/>
            <person name="Ovchinnikova G."/>
            <person name="Kataeva I."/>
            <person name="Adams M.W.W."/>
        </authorList>
    </citation>
    <scope>NUCLEOTIDE SEQUENCE [LARGE SCALE GENOMIC DNA]</scope>
    <source>
        <strain>ATCC BAA-1888 / DSM 6725 / KCTC 15123 / Z-1320</strain>
    </source>
</reference>
<name>PRMA_CALBD</name>
<proteinExistence type="inferred from homology"/>
<accession>B9MJY9</accession>
<feature type="chain" id="PRO_1000192575" description="Ribosomal protein L11 methyltransferase">
    <location>
        <begin position="1"/>
        <end position="304"/>
    </location>
</feature>
<feature type="binding site" evidence="1">
    <location>
        <position position="155"/>
    </location>
    <ligand>
        <name>S-adenosyl-L-methionine</name>
        <dbReference type="ChEBI" id="CHEBI:59789"/>
    </ligand>
</feature>
<feature type="binding site" evidence="1">
    <location>
        <position position="176"/>
    </location>
    <ligand>
        <name>S-adenosyl-L-methionine</name>
        <dbReference type="ChEBI" id="CHEBI:59789"/>
    </ligand>
</feature>
<feature type="binding site" evidence="1">
    <location>
        <position position="198"/>
    </location>
    <ligand>
        <name>S-adenosyl-L-methionine</name>
        <dbReference type="ChEBI" id="CHEBI:59789"/>
    </ligand>
</feature>
<feature type="binding site" evidence="1">
    <location>
        <position position="239"/>
    </location>
    <ligand>
        <name>S-adenosyl-L-methionine</name>
        <dbReference type="ChEBI" id="CHEBI:59789"/>
    </ligand>
</feature>
<sequence length="304" mass="34366">MRWYEISIKTTEEAEDAISNILYELGANGVVIEDNEIVTRPNLWDYIDENQFTKKDYARVCAYFPESSNILELTHTIEERLKETAKYIDIGEGKISVSEVNEKDWAEEWKKYYKPVEIGNIVIVPSWEDYKAEGNKTIVKLDPGMAFGTGTHESTILCLEAIQKYVKPGMDVLDVGTGSGILAIAAKKFLARRVLAVDIDEVAVKVAEENARLNGVEIEIKKNDLVEGIEEKFDVVVANIVADIIMRLSRDVKKVLKDDRIFISSGIIEDRLEDVLKSFEKNSLEIVEVKKLGTWCLVVSKKTV</sequence>